<proteinExistence type="inferred from homology"/>
<accession>B0BUK2</accession>
<sequence length="66" mass="8124">MILVNVHAGNCDNTLKNFKKKLQRELYFRKMKEQRYYETPSAKRVRKAQEAARRQRKFARKKMFDE</sequence>
<reference key="1">
    <citation type="journal article" date="2008" name="Infect. Immun.">
        <title>Genomic comparison of virulent Rickettsia rickettsii Sheila Smith and avirulent Rickettsia rickettsii Iowa.</title>
        <authorList>
            <person name="Ellison D.W."/>
            <person name="Clark T.R."/>
            <person name="Sturdevant D.E."/>
            <person name="Virtaneva K."/>
            <person name="Porcella S.F."/>
            <person name="Hackstadt T."/>
        </authorList>
    </citation>
    <scope>NUCLEOTIDE SEQUENCE [LARGE SCALE GENOMIC DNA]</scope>
    <source>
        <strain>Iowa</strain>
    </source>
</reference>
<gene>
    <name evidence="1" type="primary">rpsU</name>
    <name type="ordered locus">RrIowa_1126</name>
</gene>
<protein>
    <recommendedName>
        <fullName evidence="1">Small ribosomal subunit protein bS21</fullName>
    </recommendedName>
    <alternativeName>
        <fullName evidence="2">30S ribosomal protein S21</fullName>
    </alternativeName>
</protein>
<organism>
    <name type="scientific">Rickettsia rickettsii (strain Iowa)</name>
    <dbReference type="NCBI Taxonomy" id="452659"/>
    <lineage>
        <taxon>Bacteria</taxon>
        <taxon>Pseudomonadati</taxon>
        <taxon>Pseudomonadota</taxon>
        <taxon>Alphaproteobacteria</taxon>
        <taxon>Rickettsiales</taxon>
        <taxon>Rickettsiaceae</taxon>
        <taxon>Rickettsieae</taxon>
        <taxon>Rickettsia</taxon>
        <taxon>spotted fever group</taxon>
    </lineage>
</organism>
<name>RS21_RICRO</name>
<evidence type="ECO:0000255" key="1">
    <source>
        <dbReference type="HAMAP-Rule" id="MF_00358"/>
    </source>
</evidence>
<evidence type="ECO:0000305" key="2"/>
<dbReference type="EMBL" id="CP000766">
    <property type="protein sequence ID" value="ABY72912.1"/>
    <property type="molecule type" value="Genomic_DNA"/>
</dbReference>
<dbReference type="RefSeq" id="WP_012148483.1">
    <property type="nucleotide sequence ID" value="NC_010263.3"/>
</dbReference>
<dbReference type="SMR" id="B0BUK2"/>
<dbReference type="GeneID" id="79937617"/>
<dbReference type="KEGG" id="rrj:RrIowa_1126"/>
<dbReference type="eggNOG" id="COG0828">
    <property type="taxonomic scope" value="Bacteria"/>
</dbReference>
<dbReference type="HOGENOM" id="CLU_159258_0_2_5"/>
<dbReference type="Proteomes" id="UP000000796">
    <property type="component" value="Chromosome"/>
</dbReference>
<dbReference type="GO" id="GO:1990904">
    <property type="term" value="C:ribonucleoprotein complex"/>
    <property type="evidence" value="ECO:0007669"/>
    <property type="project" value="UniProtKB-KW"/>
</dbReference>
<dbReference type="GO" id="GO:0005840">
    <property type="term" value="C:ribosome"/>
    <property type="evidence" value="ECO:0007669"/>
    <property type="project" value="UniProtKB-KW"/>
</dbReference>
<dbReference type="GO" id="GO:0003735">
    <property type="term" value="F:structural constituent of ribosome"/>
    <property type="evidence" value="ECO:0007669"/>
    <property type="project" value="InterPro"/>
</dbReference>
<dbReference type="GO" id="GO:0006412">
    <property type="term" value="P:translation"/>
    <property type="evidence" value="ECO:0007669"/>
    <property type="project" value="UniProtKB-UniRule"/>
</dbReference>
<dbReference type="Gene3D" id="1.20.5.1150">
    <property type="entry name" value="Ribosomal protein S8"/>
    <property type="match status" value="1"/>
</dbReference>
<dbReference type="HAMAP" id="MF_00358">
    <property type="entry name" value="Ribosomal_bS21"/>
    <property type="match status" value="1"/>
</dbReference>
<dbReference type="InterPro" id="IPR001911">
    <property type="entry name" value="Ribosomal_bS21"/>
</dbReference>
<dbReference type="InterPro" id="IPR038380">
    <property type="entry name" value="Ribosomal_bS21_sf"/>
</dbReference>
<dbReference type="NCBIfam" id="TIGR00030">
    <property type="entry name" value="S21p"/>
    <property type="match status" value="1"/>
</dbReference>
<dbReference type="Pfam" id="PF01165">
    <property type="entry name" value="Ribosomal_S21"/>
    <property type="match status" value="1"/>
</dbReference>
<comment type="similarity">
    <text evidence="1">Belongs to the bacterial ribosomal protein bS21 family.</text>
</comment>
<feature type="chain" id="PRO_1000079416" description="Small ribosomal subunit protein bS21">
    <location>
        <begin position="1"/>
        <end position="66"/>
    </location>
</feature>
<keyword id="KW-0687">Ribonucleoprotein</keyword>
<keyword id="KW-0689">Ribosomal protein</keyword>